<dbReference type="EMBL" id="CP000627">
    <property type="protein sequence ID" value="ABQ21660.1"/>
    <property type="molecule type" value="Genomic_DNA"/>
</dbReference>
<dbReference type="EMBL" id="CP001235">
    <property type="protein sequence ID" value="ACP08390.1"/>
    <property type="molecule type" value="Genomic_DNA"/>
</dbReference>
<dbReference type="RefSeq" id="WP_001085796.1">
    <property type="nucleotide sequence ID" value="NZ_JAACZH010000036.1"/>
</dbReference>
<dbReference type="SMR" id="A5F3P1"/>
<dbReference type="GeneID" id="88783729"/>
<dbReference type="KEGG" id="vco:VC0395_A2726"/>
<dbReference type="KEGG" id="vcr:VC395_0367"/>
<dbReference type="PATRIC" id="fig|345073.21.peg.355"/>
<dbReference type="eggNOG" id="COG0080">
    <property type="taxonomic scope" value="Bacteria"/>
</dbReference>
<dbReference type="HOGENOM" id="CLU_074237_2_0_6"/>
<dbReference type="OrthoDB" id="9802408at2"/>
<dbReference type="Proteomes" id="UP000000249">
    <property type="component" value="Chromosome 2"/>
</dbReference>
<dbReference type="GO" id="GO:0022625">
    <property type="term" value="C:cytosolic large ribosomal subunit"/>
    <property type="evidence" value="ECO:0007669"/>
    <property type="project" value="TreeGrafter"/>
</dbReference>
<dbReference type="GO" id="GO:0070180">
    <property type="term" value="F:large ribosomal subunit rRNA binding"/>
    <property type="evidence" value="ECO:0007669"/>
    <property type="project" value="UniProtKB-UniRule"/>
</dbReference>
<dbReference type="GO" id="GO:0003735">
    <property type="term" value="F:structural constituent of ribosome"/>
    <property type="evidence" value="ECO:0007669"/>
    <property type="project" value="InterPro"/>
</dbReference>
<dbReference type="GO" id="GO:0006412">
    <property type="term" value="P:translation"/>
    <property type="evidence" value="ECO:0007669"/>
    <property type="project" value="UniProtKB-UniRule"/>
</dbReference>
<dbReference type="CDD" id="cd00349">
    <property type="entry name" value="Ribosomal_L11"/>
    <property type="match status" value="1"/>
</dbReference>
<dbReference type="FunFam" id="1.10.10.250:FF:000001">
    <property type="entry name" value="50S ribosomal protein L11"/>
    <property type="match status" value="1"/>
</dbReference>
<dbReference type="FunFam" id="3.30.1550.10:FF:000001">
    <property type="entry name" value="50S ribosomal protein L11"/>
    <property type="match status" value="1"/>
</dbReference>
<dbReference type="Gene3D" id="1.10.10.250">
    <property type="entry name" value="Ribosomal protein L11, C-terminal domain"/>
    <property type="match status" value="1"/>
</dbReference>
<dbReference type="Gene3D" id="3.30.1550.10">
    <property type="entry name" value="Ribosomal protein L11/L12, N-terminal domain"/>
    <property type="match status" value="1"/>
</dbReference>
<dbReference type="HAMAP" id="MF_00736">
    <property type="entry name" value="Ribosomal_uL11"/>
    <property type="match status" value="1"/>
</dbReference>
<dbReference type="InterPro" id="IPR000911">
    <property type="entry name" value="Ribosomal_uL11"/>
</dbReference>
<dbReference type="InterPro" id="IPR006519">
    <property type="entry name" value="Ribosomal_uL11_bac-typ"/>
</dbReference>
<dbReference type="InterPro" id="IPR020783">
    <property type="entry name" value="Ribosomal_uL11_C"/>
</dbReference>
<dbReference type="InterPro" id="IPR036769">
    <property type="entry name" value="Ribosomal_uL11_C_sf"/>
</dbReference>
<dbReference type="InterPro" id="IPR020785">
    <property type="entry name" value="Ribosomal_uL11_CS"/>
</dbReference>
<dbReference type="InterPro" id="IPR020784">
    <property type="entry name" value="Ribosomal_uL11_N"/>
</dbReference>
<dbReference type="InterPro" id="IPR036796">
    <property type="entry name" value="Ribosomal_uL11_N_sf"/>
</dbReference>
<dbReference type="NCBIfam" id="TIGR01632">
    <property type="entry name" value="L11_bact"/>
    <property type="match status" value="1"/>
</dbReference>
<dbReference type="PANTHER" id="PTHR11661">
    <property type="entry name" value="60S RIBOSOMAL PROTEIN L12"/>
    <property type="match status" value="1"/>
</dbReference>
<dbReference type="PANTHER" id="PTHR11661:SF1">
    <property type="entry name" value="LARGE RIBOSOMAL SUBUNIT PROTEIN UL11M"/>
    <property type="match status" value="1"/>
</dbReference>
<dbReference type="Pfam" id="PF00298">
    <property type="entry name" value="Ribosomal_L11"/>
    <property type="match status" value="1"/>
</dbReference>
<dbReference type="Pfam" id="PF03946">
    <property type="entry name" value="Ribosomal_L11_N"/>
    <property type="match status" value="1"/>
</dbReference>
<dbReference type="SMART" id="SM00649">
    <property type="entry name" value="RL11"/>
    <property type="match status" value="1"/>
</dbReference>
<dbReference type="SUPFAM" id="SSF54747">
    <property type="entry name" value="Ribosomal L11/L12e N-terminal domain"/>
    <property type="match status" value="1"/>
</dbReference>
<dbReference type="SUPFAM" id="SSF46906">
    <property type="entry name" value="Ribosomal protein L11, C-terminal domain"/>
    <property type="match status" value="1"/>
</dbReference>
<dbReference type="PROSITE" id="PS00359">
    <property type="entry name" value="RIBOSOMAL_L11"/>
    <property type="match status" value="1"/>
</dbReference>
<sequence>MAKKVEAYVKLQVAAGMANPSPPVGPALGQRGVNIMEFCKAFNARTESLEKGLPIPVVITVYSDRSFTFETKTPPASVLLKKAAGIKSGSARPNTAKVGTITDAQIQEIAATKAADMTGADIEAMKRSIAGTARSMGLVVEG</sequence>
<protein>
    <recommendedName>
        <fullName evidence="1">Large ribosomal subunit protein uL11</fullName>
    </recommendedName>
    <alternativeName>
        <fullName evidence="2">50S ribosomal protein L11</fullName>
    </alternativeName>
</protein>
<reference key="1">
    <citation type="submission" date="2007-03" db="EMBL/GenBank/DDBJ databases">
        <authorList>
            <person name="Heidelberg J."/>
        </authorList>
    </citation>
    <scope>NUCLEOTIDE SEQUENCE [LARGE SCALE GENOMIC DNA]</scope>
    <source>
        <strain>ATCC 39541 / Classical Ogawa 395 / O395</strain>
    </source>
</reference>
<reference key="2">
    <citation type="journal article" date="2008" name="PLoS ONE">
        <title>A recalibrated molecular clock and independent origins for the cholera pandemic clones.</title>
        <authorList>
            <person name="Feng L."/>
            <person name="Reeves P.R."/>
            <person name="Lan R."/>
            <person name="Ren Y."/>
            <person name="Gao C."/>
            <person name="Zhou Z."/>
            <person name="Ren Y."/>
            <person name="Cheng J."/>
            <person name="Wang W."/>
            <person name="Wang J."/>
            <person name="Qian W."/>
            <person name="Li D."/>
            <person name="Wang L."/>
        </authorList>
    </citation>
    <scope>NUCLEOTIDE SEQUENCE [LARGE SCALE GENOMIC DNA]</scope>
    <source>
        <strain>ATCC 39541 / Classical Ogawa 395 / O395</strain>
    </source>
</reference>
<organism>
    <name type="scientific">Vibrio cholerae serotype O1 (strain ATCC 39541 / Classical Ogawa 395 / O395)</name>
    <dbReference type="NCBI Taxonomy" id="345073"/>
    <lineage>
        <taxon>Bacteria</taxon>
        <taxon>Pseudomonadati</taxon>
        <taxon>Pseudomonadota</taxon>
        <taxon>Gammaproteobacteria</taxon>
        <taxon>Vibrionales</taxon>
        <taxon>Vibrionaceae</taxon>
        <taxon>Vibrio</taxon>
    </lineage>
</organism>
<comment type="function">
    <text evidence="1">Forms part of the ribosomal stalk which helps the ribosome interact with GTP-bound translation factors.</text>
</comment>
<comment type="subunit">
    <text evidence="1">Part of the ribosomal stalk of the 50S ribosomal subunit. Interacts with L10 and the large rRNA to form the base of the stalk. L10 forms an elongated spine to which L12 dimers bind in a sequential fashion forming a multimeric L10(L12)X complex.</text>
</comment>
<comment type="PTM">
    <text evidence="1">One or more lysine residues are methylated.</text>
</comment>
<comment type="similarity">
    <text evidence="1">Belongs to the universal ribosomal protein uL11 family.</text>
</comment>
<feature type="chain" id="PRO_1000072805" description="Large ribosomal subunit protein uL11">
    <location>
        <begin position="1"/>
        <end position="142"/>
    </location>
</feature>
<accession>A5F3P1</accession>
<accession>C3M3Y2</accession>
<evidence type="ECO:0000255" key="1">
    <source>
        <dbReference type="HAMAP-Rule" id="MF_00736"/>
    </source>
</evidence>
<evidence type="ECO:0000305" key="2"/>
<name>RL11_VIBC3</name>
<proteinExistence type="inferred from homology"/>
<gene>
    <name evidence="1" type="primary">rplK</name>
    <name type="ordered locus">VC0395_A2726</name>
    <name type="ordered locus">VC395_0367</name>
</gene>
<keyword id="KW-0488">Methylation</keyword>
<keyword id="KW-0687">Ribonucleoprotein</keyword>
<keyword id="KW-0689">Ribosomal protein</keyword>
<keyword id="KW-0694">RNA-binding</keyword>
<keyword id="KW-0699">rRNA-binding</keyword>